<dbReference type="EC" id="2.5.1.39" evidence="1"/>
<dbReference type="EMBL" id="CP000687">
    <property type="protein sequence ID" value="ABY69387.1"/>
    <property type="molecule type" value="Genomic_DNA"/>
</dbReference>
<dbReference type="RefSeq" id="WP_012262975.1">
    <property type="nucleotide sequence ID" value="NC_010278.1"/>
</dbReference>
<dbReference type="SMR" id="B0BPA2"/>
<dbReference type="KEGG" id="apj:APJL_0829"/>
<dbReference type="HOGENOM" id="CLU_034879_1_0_6"/>
<dbReference type="UniPathway" id="UPA00232"/>
<dbReference type="Proteomes" id="UP000008547">
    <property type="component" value="Chromosome"/>
</dbReference>
<dbReference type="GO" id="GO:0005886">
    <property type="term" value="C:plasma membrane"/>
    <property type="evidence" value="ECO:0007669"/>
    <property type="project" value="UniProtKB-SubCell"/>
</dbReference>
<dbReference type="GO" id="GO:0008412">
    <property type="term" value="F:4-hydroxybenzoate polyprenyltransferase activity"/>
    <property type="evidence" value="ECO:0007669"/>
    <property type="project" value="UniProtKB-UniRule"/>
</dbReference>
<dbReference type="GO" id="GO:0006744">
    <property type="term" value="P:ubiquinone biosynthetic process"/>
    <property type="evidence" value="ECO:0007669"/>
    <property type="project" value="UniProtKB-UniRule"/>
</dbReference>
<dbReference type="CDD" id="cd13959">
    <property type="entry name" value="PT_UbiA_COQ2"/>
    <property type="match status" value="1"/>
</dbReference>
<dbReference type="FunFam" id="1.10.357.140:FF:000002">
    <property type="entry name" value="4-hydroxybenzoate octaprenyltransferase"/>
    <property type="match status" value="1"/>
</dbReference>
<dbReference type="FunFam" id="1.20.120.1780:FF:000001">
    <property type="entry name" value="4-hydroxybenzoate octaprenyltransferase"/>
    <property type="match status" value="1"/>
</dbReference>
<dbReference type="Gene3D" id="1.10.357.140">
    <property type="entry name" value="UbiA prenyltransferase"/>
    <property type="match status" value="1"/>
</dbReference>
<dbReference type="Gene3D" id="1.20.120.1780">
    <property type="entry name" value="UbiA prenyltransferase"/>
    <property type="match status" value="1"/>
</dbReference>
<dbReference type="HAMAP" id="MF_01635">
    <property type="entry name" value="UbiA"/>
    <property type="match status" value="1"/>
</dbReference>
<dbReference type="InterPro" id="IPR006370">
    <property type="entry name" value="HB_polyprenyltransferase-like"/>
</dbReference>
<dbReference type="InterPro" id="IPR039653">
    <property type="entry name" value="Prenyltransferase"/>
</dbReference>
<dbReference type="InterPro" id="IPR000537">
    <property type="entry name" value="UbiA_prenyltransferase"/>
</dbReference>
<dbReference type="InterPro" id="IPR030470">
    <property type="entry name" value="UbiA_prenylTrfase_CS"/>
</dbReference>
<dbReference type="InterPro" id="IPR044878">
    <property type="entry name" value="UbiA_sf"/>
</dbReference>
<dbReference type="NCBIfam" id="TIGR01474">
    <property type="entry name" value="ubiA_proteo"/>
    <property type="match status" value="1"/>
</dbReference>
<dbReference type="PANTHER" id="PTHR11048:SF28">
    <property type="entry name" value="4-HYDROXYBENZOATE POLYPRENYLTRANSFERASE, MITOCHONDRIAL"/>
    <property type="match status" value="1"/>
</dbReference>
<dbReference type="PANTHER" id="PTHR11048">
    <property type="entry name" value="PRENYLTRANSFERASES"/>
    <property type="match status" value="1"/>
</dbReference>
<dbReference type="Pfam" id="PF01040">
    <property type="entry name" value="UbiA"/>
    <property type="match status" value="1"/>
</dbReference>
<dbReference type="PROSITE" id="PS00943">
    <property type="entry name" value="UBIA"/>
    <property type="match status" value="1"/>
</dbReference>
<gene>
    <name evidence="1" type="primary">ubiA</name>
    <name type="ordered locus">APJL_0829</name>
</gene>
<protein>
    <recommendedName>
        <fullName evidence="1">4-hydroxybenzoate octaprenyltransferase</fullName>
        <ecNumber evidence="1">2.5.1.39</ecNumber>
    </recommendedName>
    <alternativeName>
        <fullName evidence="1">4-HB polyprenyltransferase</fullName>
    </alternativeName>
</protein>
<comment type="function">
    <text evidence="1">Catalyzes the prenylation of para-hydroxybenzoate (PHB) with an all-trans polyprenyl group. Mediates the second step in the final reaction sequence of ubiquinone-8 (UQ-8) biosynthesis, which is the condensation of the polyisoprenoid side chain with PHB, generating the first membrane-bound Q intermediate 3-octaprenyl-4-hydroxybenzoate.</text>
</comment>
<comment type="catalytic activity">
    <reaction evidence="1">
        <text>all-trans-octaprenyl diphosphate + 4-hydroxybenzoate = 4-hydroxy-3-(all-trans-octaprenyl)benzoate + diphosphate</text>
        <dbReference type="Rhea" id="RHEA:27782"/>
        <dbReference type="ChEBI" id="CHEBI:1617"/>
        <dbReference type="ChEBI" id="CHEBI:17879"/>
        <dbReference type="ChEBI" id="CHEBI:33019"/>
        <dbReference type="ChEBI" id="CHEBI:57711"/>
        <dbReference type="EC" id="2.5.1.39"/>
    </reaction>
</comment>
<comment type="cofactor">
    <cofactor evidence="1">
        <name>Mg(2+)</name>
        <dbReference type="ChEBI" id="CHEBI:18420"/>
    </cofactor>
</comment>
<comment type="pathway">
    <text evidence="1">Cofactor biosynthesis; ubiquinone biosynthesis.</text>
</comment>
<comment type="subcellular location">
    <subcellularLocation>
        <location evidence="1">Cell inner membrane</location>
        <topology evidence="1">Multi-pass membrane protein</topology>
    </subcellularLocation>
</comment>
<comment type="similarity">
    <text evidence="1">Belongs to the UbiA prenyltransferase family.</text>
</comment>
<feature type="chain" id="PRO_0000336970" description="4-hydroxybenzoate octaprenyltransferase">
    <location>
        <begin position="1"/>
        <end position="293"/>
    </location>
</feature>
<feature type="transmembrane region" description="Helical" evidence="1">
    <location>
        <begin position="26"/>
        <end position="48"/>
    </location>
</feature>
<feature type="transmembrane region" description="Helical" evidence="1">
    <location>
        <begin position="98"/>
        <end position="118"/>
    </location>
</feature>
<feature type="transmembrane region" description="Helical" evidence="1">
    <location>
        <begin position="122"/>
        <end position="142"/>
    </location>
</feature>
<feature type="transmembrane region" description="Helical" evidence="1">
    <location>
        <begin position="145"/>
        <end position="165"/>
    </location>
</feature>
<feature type="transmembrane region" description="Helical" evidence="1">
    <location>
        <begin position="167"/>
        <end position="187"/>
    </location>
</feature>
<feature type="transmembrane region" description="Helical" evidence="1">
    <location>
        <begin position="218"/>
        <end position="238"/>
    </location>
</feature>
<feature type="transmembrane region" description="Helical" evidence="1">
    <location>
        <begin position="241"/>
        <end position="261"/>
    </location>
</feature>
<feature type="transmembrane region" description="Helical" evidence="1">
    <location>
        <begin position="272"/>
        <end position="292"/>
    </location>
</feature>
<sequence>MTTFFQQHFSRNKWLAYAQLMRFDKPIGTLLLLYPTLWALFAAAGGMPPLSVLVIFVLGVIVMRAAGCVINDYADRHIDGEVKRTSQRPLATGRVTTTEAKILFVLLLCIAFVLDLLLNRYTFLLSFVAVALAIIYPFMKRFTHLPQVVLGMAFGWAIPMAYGAVSESLPLECWLLFFANIFWTVAYDTQYAMVDRDDDLRIGVKSTAILFAQYDNKIIALLQFITLVLLVIFGWISQYHWGYFVVLGLSASLFSHQCWLTKQRVREQCFKAFLNNHYFGLGVFFAILVGIYA</sequence>
<accession>B0BPA2</accession>
<proteinExistence type="inferred from homology"/>
<evidence type="ECO:0000255" key="1">
    <source>
        <dbReference type="HAMAP-Rule" id="MF_01635"/>
    </source>
</evidence>
<reference key="1">
    <citation type="journal article" date="2008" name="PLoS ONE">
        <title>Genome biology of Actinobacillus pleuropneumoniae JL03, an isolate of serotype 3 prevalent in China.</title>
        <authorList>
            <person name="Xu Z."/>
            <person name="Zhou Y."/>
            <person name="Li L."/>
            <person name="Zhou R."/>
            <person name="Xiao S."/>
            <person name="Wan Y."/>
            <person name="Zhang S."/>
            <person name="Wang K."/>
            <person name="Li W."/>
            <person name="Li L."/>
            <person name="Jin H."/>
            <person name="Kang M."/>
            <person name="Dalai B."/>
            <person name="Li T."/>
            <person name="Liu L."/>
            <person name="Cheng Y."/>
            <person name="Zhang L."/>
            <person name="Xu T."/>
            <person name="Zheng H."/>
            <person name="Pu S."/>
            <person name="Wang B."/>
            <person name="Gu W."/>
            <person name="Zhang X.L."/>
            <person name="Zhu G.-F."/>
            <person name="Wang S."/>
            <person name="Zhao G.-P."/>
            <person name="Chen H."/>
        </authorList>
    </citation>
    <scope>NUCLEOTIDE SEQUENCE [LARGE SCALE GENOMIC DNA]</scope>
    <source>
        <strain>JL03</strain>
    </source>
</reference>
<name>UBIA_ACTPJ</name>
<organism>
    <name type="scientific">Actinobacillus pleuropneumoniae serotype 3 (strain JL03)</name>
    <dbReference type="NCBI Taxonomy" id="434271"/>
    <lineage>
        <taxon>Bacteria</taxon>
        <taxon>Pseudomonadati</taxon>
        <taxon>Pseudomonadota</taxon>
        <taxon>Gammaproteobacteria</taxon>
        <taxon>Pasteurellales</taxon>
        <taxon>Pasteurellaceae</taxon>
        <taxon>Actinobacillus</taxon>
    </lineage>
</organism>
<keyword id="KW-0997">Cell inner membrane</keyword>
<keyword id="KW-1003">Cell membrane</keyword>
<keyword id="KW-0460">Magnesium</keyword>
<keyword id="KW-0472">Membrane</keyword>
<keyword id="KW-0808">Transferase</keyword>
<keyword id="KW-0812">Transmembrane</keyword>
<keyword id="KW-1133">Transmembrane helix</keyword>
<keyword id="KW-0831">Ubiquinone biosynthesis</keyword>